<dbReference type="EC" id="3.6.5.n1" evidence="1"/>
<dbReference type="EMBL" id="BX294153">
    <property type="protein sequence ID" value="CAD79254.1"/>
    <property type="molecule type" value="Genomic_DNA"/>
</dbReference>
<dbReference type="RefSeq" id="NP_870099.1">
    <property type="nucleotide sequence ID" value="NC_005027.1"/>
</dbReference>
<dbReference type="RefSeq" id="WP_007334775.1">
    <property type="nucleotide sequence ID" value="NC_005027.1"/>
</dbReference>
<dbReference type="SMR" id="Q7UE01"/>
<dbReference type="FunCoup" id="Q7UE01">
    <property type="interactions" value="534"/>
</dbReference>
<dbReference type="STRING" id="243090.RB11673"/>
<dbReference type="EnsemblBacteria" id="CAD79254">
    <property type="protein sequence ID" value="CAD79254"/>
    <property type="gene ID" value="RB11673"/>
</dbReference>
<dbReference type="KEGG" id="rba:RB11673"/>
<dbReference type="PATRIC" id="fig|243090.15.peg.5654"/>
<dbReference type="eggNOG" id="COG0481">
    <property type="taxonomic scope" value="Bacteria"/>
</dbReference>
<dbReference type="HOGENOM" id="CLU_009995_3_3_0"/>
<dbReference type="InParanoid" id="Q7UE01"/>
<dbReference type="OrthoDB" id="9804431at2"/>
<dbReference type="Proteomes" id="UP000001025">
    <property type="component" value="Chromosome"/>
</dbReference>
<dbReference type="GO" id="GO:0005886">
    <property type="term" value="C:plasma membrane"/>
    <property type="evidence" value="ECO:0007669"/>
    <property type="project" value="UniProtKB-SubCell"/>
</dbReference>
<dbReference type="GO" id="GO:0005525">
    <property type="term" value="F:GTP binding"/>
    <property type="evidence" value="ECO:0007669"/>
    <property type="project" value="UniProtKB-UniRule"/>
</dbReference>
<dbReference type="GO" id="GO:0003924">
    <property type="term" value="F:GTPase activity"/>
    <property type="evidence" value="ECO:0007669"/>
    <property type="project" value="UniProtKB-UniRule"/>
</dbReference>
<dbReference type="GO" id="GO:0043022">
    <property type="term" value="F:ribosome binding"/>
    <property type="evidence" value="ECO:0000318"/>
    <property type="project" value="GO_Central"/>
</dbReference>
<dbReference type="GO" id="GO:0003746">
    <property type="term" value="F:translation elongation factor activity"/>
    <property type="evidence" value="ECO:0007669"/>
    <property type="project" value="UniProtKB-UniRule"/>
</dbReference>
<dbReference type="GO" id="GO:0045727">
    <property type="term" value="P:positive regulation of translation"/>
    <property type="evidence" value="ECO:0000318"/>
    <property type="project" value="GO_Central"/>
</dbReference>
<dbReference type="CDD" id="cd03699">
    <property type="entry name" value="EF4_II"/>
    <property type="match status" value="1"/>
</dbReference>
<dbReference type="CDD" id="cd16260">
    <property type="entry name" value="EF4_III"/>
    <property type="match status" value="1"/>
</dbReference>
<dbReference type="CDD" id="cd01890">
    <property type="entry name" value="LepA"/>
    <property type="match status" value="1"/>
</dbReference>
<dbReference type="CDD" id="cd03709">
    <property type="entry name" value="lepA_C"/>
    <property type="match status" value="1"/>
</dbReference>
<dbReference type="FunFam" id="3.40.50.300:FF:000078">
    <property type="entry name" value="Elongation factor 4"/>
    <property type="match status" value="1"/>
</dbReference>
<dbReference type="FunFam" id="2.40.30.10:FF:000015">
    <property type="entry name" value="Translation factor GUF1, mitochondrial"/>
    <property type="match status" value="1"/>
</dbReference>
<dbReference type="FunFam" id="3.30.70.240:FF:000007">
    <property type="entry name" value="Translation factor GUF1, mitochondrial"/>
    <property type="match status" value="1"/>
</dbReference>
<dbReference type="FunFam" id="3.30.70.2570:FF:000001">
    <property type="entry name" value="Translation factor GUF1, mitochondrial"/>
    <property type="match status" value="1"/>
</dbReference>
<dbReference type="FunFam" id="3.30.70.870:FF:000004">
    <property type="entry name" value="Translation factor GUF1, mitochondrial"/>
    <property type="match status" value="1"/>
</dbReference>
<dbReference type="Gene3D" id="3.30.70.240">
    <property type="match status" value="1"/>
</dbReference>
<dbReference type="Gene3D" id="3.30.70.2570">
    <property type="entry name" value="Elongation factor 4, C-terminal domain"/>
    <property type="match status" value="1"/>
</dbReference>
<dbReference type="Gene3D" id="3.30.70.870">
    <property type="entry name" value="Elongation Factor G (Translational Gtpase), domain 3"/>
    <property type="match status" value="1"/>
</dbReference>
<dbReference type="Gene3D" id="3.40.50.300">
    <property type="entry name" value="P-loop containing nucleotide triphosphate hydrolases"/>
    <property type="match status" value="1"/>
</dbReference>
<dbReference type="Gene3D" id="2.40.30.10">
    <property type="entry name" value="Translation factors"/>
    <property type="match status" value="1"/>
</dbReference>
<dbReference type="HAMAP" id="MF_00071">
    <property type="entry name" value="LepA"/>
    <property type="match status" value="1"/>
</dbReference>
<dbReference type="InterPro" id="IPR006297">
    <property type="entry name" value="EF-4"/>
</dbReference>
<dbReference type="InterPro" id="IPR035647">
    <property type="entry name" value="EFG_III/V"/>
</dbReference>
<dbReference type="InterPro" id="IPR000640">
    <property type="entry name" value="EFG_V-like"/>
</dbReference>
<dbReference type="InterPro" id="IPR004161">
    <property type="entry name" value="EFTu-like_2"/>
</dbReference>
<dbReference type="InterPro" id="IPR031157">
    <property type="entry name" value="G_TR_CS"/>
</dbReference>
<dbReference type="InterPro" id="IPR038363">
    <property type="entry name" value="LepA_C_sf"/>
</dbReference>
<dbReference type="InterPro" id="IPR013842">
    <property type="entry name" value="LepA_CTD"/>
</dbReference>
<dbReference type="InterPro" id="IPR035654">
    <property type="entry name" value="LepA_IV"/>
</dbReference>
<dbReference type="InterPro" id="IPR027417">
    <property type="entry name" value="P-loop_NTPase"/>
</dbReference>
<dbReference type="InterPro" id="IPR005225">
    <property type="entry name" value="Small_GTP-bd"/>
</dbReference>
<dbReference type="InterPro" id="IPR000795">
    <property type="entry name" value="T_Tr_GTP-bd_dom"/>
</dbReference>
<dbReference type="InterPro" id="IPR009000">
    <property type="entry name" value="Transl_B-barrel_sf"/>
</dbReference>
<dbReference type="NCBIfam" id="TIGR01393">
    <property type="entry name" value="lepA"/>
    <property type="match status" value="1"/>
</dbReference>
<dbReference type="NCBIfam" id="TIGR00231">
    <property type="entry name" value="small_GTP"/>
    <property type="match status" value="1"/>
</dbReference>
<dbReference type="PANTHER" id="PTHR43512:SF4">
    <property type="entry name" value="TRANSLATION FACTOR GUF1 HOMOLOG, CHLOROPLASTIC"/>
    <property type="match status" value="1"/>
</dbReference>
<dbReference type="PANTHER" id="PTHR43512">
    <property type="entry name" value="TRANSLATION FACTOR GUF1-RELATED"/>
    <property type="match status" value="1"/>
</dbReference>
<dbReference type="Pfam" id="PF00679">
    <property type="entry name" value="EFG_C"/>
    <property type="match status" value="1"/>
</dbReference>
<dbReference type="Pfam" id="PF00009">
    <property type="entry name" value="GTP_EFTU"/>
    <property type="match status" value="1"/>
</dbReference>
<dbReference type="Pfam" id="PF03144">
    <property type="entry name" value="GTP_EFTU_D2"/>
    <property type="match status" value="1"/>
</dbReference>
<dbReference type="Pfam" id="PF06421">
    <property type="entry name" value="LepA_C"/>
    <property type="match status" value="1"/>
</dbReference>
<dbReference type="PRINTS" id="PR00315">
    <property type="entry name" value="ELONGATNFCT"/>
</dbReference>
<dbReference type="SUPFAM" id="SSF54980">
    <property type="entry name" value="EF-G C-terminal domain-like"/>
    <property type="match status" value="2"/>
</dbReference>
<dbReference type="SUPFAM" id="SSF52540">
    <property type="entry name" value="P-loop containing nucleoside triphosphate hydrolases"/>
    <property type="match status" value="1"/>
</dbReference>
<dbReference type="SUPFAM" id="SSF50447">
    <property type="entry name" value="Translation proteins"/>
    <property type="match status" value="1"/>
</dbReference>
<dbReference type="PROSITE" id="PS00301">
    <property type="entry name" value="G_TR_1"/>
    <property type="match status" value="1"/>
</dbReference>
<dbReference type="PROSITE" id="PS51722">
    <property type="entry name" value="G_TR_2"/>
    <property type="match status" value="1"/>
</dbReference>
<protein>
    <recommendedName>
        <fullName evidence="1">Elongation factor 4 2</fullName>
        <shortName evidence="1">EF-4 2</shortName>
        <ecNumber evidence="1">3.6.5.n1</ecNumber>
    </recommendedName>
    <alternativeName>
        <fullName evidence="1">Ribosomal back-translocase LepA 2</fullName>
    </alternativeName>
</protein>
<evidence type="ECO:0000255" key="1">
    <source>
        <dbReference type="HAMAP-Rule" id="MF_00071"/>
    </source>
</evidence>
<gene>
    <name evidence="1" type="primary">lepA2</name>
    <name type="ordered locus">RB11673</name>
</gene>
<feature type="chain" id="PRO_0000176331" description="Elongation factor 4 2">
    <location>
        <begin position="1"/>
        <end position="598"/>
    </location>
</feature>
<feature type="domain" description="tr-type G">
    <location>
        <begin position="2"/>
        <end position="184"/>
    </location>
</feature>
<feature type="binding site" evidence="1">
    <location>
        <begin position="14"/>
        <end position="19"/>
    </location>
    <ligand>
        <name>GTP</name>
        <dbReference type="ChEBI" id="CHEBI:37565"/>
    </ligand>
</feature>
<feature type="binding site" evidence="1">
    <location>
        <begin position="131"/>
        <end position="134"/>
    </location>
    <ligand>
        <name>GTP</name>
        <dbReference type="ChEBI" id="CHEBI:37565"/>
    </ligand>
</feature>
<organism>
    <name type="scientific">Rhodopirellula baltica (strain DSM 10527 / NCIMB 13988 / SH1)</name>
    <dbReference type="NCBI Taxonomy" id="243090"/>
    <lineage>
        <taxon>Bacteria</taxon>
        <taxon>Pseudomonadati</taxon>
        <taxon>Planctomycetota</taxon>
        <taxon>Planctomycetia</taxon>
        <taxon>Pirellulales</taxon>
        <taxon>Pirellulaceae</taxon>
        <taxon>Rhodopirellula</taxon>
    </lineage>
</organism>
<name>LEPA2_RHOBA</name>
<reference key="1">
    <citation type="journal article" date="2003" name="Proc. Natl. Acad. Sci. U.S.A.">
        <title>Complete genome sequence of the marine planctomycete Pirellula sp. strain 1.</title>
        <authorList>
            <person name="Gloeckner F.O."/>
            <person name="Kube M."/>
            <person name="Bauer M."/>
            <person name="Teeling H."/>
            <person name="Lombardot T."/>
            <person name="Ludwig W."/>
            <person name="Gade D."/>
            <person name="Beck A."/>
            <person name="Borzym K."/>
            <person name="Heitmann K."/>
            <person name="Rabus R."/>
            <person name="Schlesner H."/>
            <person name="Amann R."/>
            <person name="Reinhardt R."/>
        </authorList>
    </citation>
    <scope>NUCLEOTIDE SEQUENCE [LARGE SCALE GENOMIC DNA]</scope>
    <source>
        <strain>DSM 10527 / NCIMB 13988 / SH1</strain>
    </source>
</reference>
<sequence>MKHIRNFCIIAHIDHGKSTLADRLIQSCGGVTQREFHDQMLDSMDIERERGITIKSNTVTLNYTAKDGEAYQLNLIDTPGHVDFSHEVRRSLMACEGALMVVDASQGVEAQTVANLYLALEYDLELLPVINKIDLPAADVDRVRGEIDEDLGLDPFVAIPVSAKTGQGIEDVLEGIVKNLPAPKGDPKAPLKALVFDAFFDKYRGVILQCRVMEGTLKPKDEIHFMHADRDFTVDELGYNQFKLVPKKELTAGEVGYIVAGVKTVQDIEIGDTITLANRPADEPIPGYQPARQVVFSSVYPMSTDEYQDLTKALEKLSINDAALTFEKDSSAALGFGYRCGFLGLLHLDVVQERLQREFDIGLVISAPSVQYKIKLKDGTTQDVDNPTYWPDPSTIDSVSEPYIKAQILIPEEYVGPVMELCREHRSESQTMNYLSAGRLEVTSEMPLGEVLFDFYGKLKMITRGYGSFDYVPIEYRKTDIVKVDILVNKEPVDALAYLVHRDKSRARAMHYCEQLAEAIPRHQFKIPIQGAIGGTVIARTTIAPYRKDVTAKLYGGDVSRKKKLLEKQKKGKAKMKQFGSVNIPQKAFISVLRTDKD</sequence>
<accession>Q7UE01</accession>
<comment type="function">
    <text evidence="1">Required for accurate and efficient protein synthesis under certain stress conditions. May act as a fidelity factor of the translation reaction, by catalyzing a one-codon backward translocation of tRNAs on improperly translocated ribosomes. Back-translocation proceeds from a post-translocation (POST) complex to a pre-translocation (PRE) complex, thus giving elongation factor G a second chance to translocate the tRNAs correctly. Binds to ribosomes in a GTP-dependent manner.</text>
</comment>
<comment type="catalytic activity">
    <reaction evidence="1">
        <text>GTP + H2O = GDP + phosphate + H(+)</text>
        <dbReference type="Rhea" id="RHEA:19669"/>
        <dbReference type="ChEBI" id="CHEBI:15377"/>
        <dbReference type="ChEBI" id="CHEBI:15378"/>
        <dbReference type="ChEBI" id="CHEBI:37565"/>
        <dbReference type="ChEBI" id="CHEBI:43474"/>
        <dbReference type="ChEBI" id="CHEBI:58189"/>
        <dbReference type="EC" id="3.6.5.n1"/>
    </reaction>
</comment>
<comment type="subcellular location">
    <subcellularLocation>
        <location evidence="1">Cell inner membrane</location>
        <topology evidence="1">Peripheral membrane protein</topology>
        <orientation evidence="1">Cytoplasmic side</orientation>
    </subcellularLocation>
</comment>
<comment type="similarity">
    <text evidence="1">Belongs to the TRAFAC class translation factor GTPase superfamily. Classic translation factor GTPase family. LepA subfamily.</text>
</comment>
<keyword id="KW-0997">Cell inner membrane</keyword>
<keyword id="KW-1003">Cell membrane</keyword>
<keyword id="KW-0342">GTP-binding</keyword>
<keyword id="KW-0378">Hydrolase</keyword>
<keyword id="KW-0472">Membrane</keyword>
<keyword id="KW-0547">Nucleotide-binding</keyword>
<keyword id="KW-0648">Protein biosynthesis</keyword>
<keyword id="KW-1185">Reference proteome</keyword>
<proteinExistence type="inferred from homology"/>